<protein>
    <recommendedName>
        <fullName evidence="1">Small ribosomal subunit protein uS10</fullName>
    </recommendedName>
    <alternativeName>
        <fullName evidence="2">30S ribosomal protein S10</fullName>
    </alternativeName>
</protein>
<gene>
    <name evidence="1" type="primary">rpsJ</name>
    <name type="ordered locus">BCG9842_B5196</name>
</gene>
<comment type="function">
    <text evidence="1">Involved in the binding of tRNA to the ribosomes.</text>
</comment>
<comment type="subunit">
    <text evidence="1">Part of the 30S ribosomal subunit.</text>
</comment>
<comment type="similarity">
    <text evidence="1">Belongs to the universal ribosomal protein uS10 family.</text>
</comment>
<feature type="chain" id="PRO_1000127077" description="Small ribosomal subunit protein uS10">
    <location>
        <begin position="1"/>
        <end position="102"/>
    </location>
</feature>
<keyword id="KW-0687">Ribonucleoprotein</keyword>
<keyword id="KW-0689">Ribosomal protein</keyword>
<dbReference type="EMBL" id="CP001186">
    <property type="protein sequence ID" value="ACK94862.1"/>
    <property type="molecule type" value="Genomic_DNA"/>
</dbReference>
<dbReference type="RefSeq" id="WP_001040595.1">
    <property type="nucleotide sequence ID" value="NC_011772.1"/>
</dbReference>
<dbReference type="SMR" id="B7IT18"/>
<dbReference type="GeneID" id="92887802"/>
<dbReference type="KEGG" id="bcg:BCG9842_B5196"/>
<dbReference type="HOGENOM" id="CLU_122625_1_3_9"/>
<dbReference type="Proteomes" id="UP000006744">
    <property type="component" value="Chromosome"/>
</dbReference>
<dbReference type="GO" id="GO:1990904">
    <property type="term" value="C:ribonucleoprotein complex"/>
    <property type="evidence" value="ECO:0007669"/>
    <property type="project" value="UniProtKB-KW"/>
</dbReference>
<dbReference type="GO" id="GO:0005840">
    <property type="term" value="C:ribosome"/>
    <property type="evidence" value="ECO:0007669"/>
    <property type="project" value="UniProtKB-KW"/>
</dbReference>
<dbReference type="GO" id="GO:0003735">
    <property type="term" value="F:structural constituent of ribosome"/>
    <property type="evidence" value="ECO:0007669"/>
    <property type="project" value="InterPro"/>
</dbReference>
<dbReference type="GO" id="GO:0000049">
    <property type="term" value="F:tRNA binding"/>
    <property type="evidence" value="ECO:0007669"/>
    <property type="project" value="UniProtKB-UniRule"/>
</dbReference>
<dbReference type="GO" id="GO:0006412">
    <property type="term" value="P:translation"/>
    <property type="evidence" value="ECO:0007669"/>
    <property type="project" value="UniProtKB-UniRule"/>
</dbReference>
<dbReference type="FunFam" id="3.30.70.600:FF:000001">
    <property type="entry name" value="30S ribosomal protein S10"/>
    <property type="match status" value="1"/>
</dbReference>
<dbReference type="Gene3D" id="3.30.70.600">
    <property type="entry name" value="Ribosomal protein S10 domain"/>
    <property type="match status" value="1"/>
</dbReference>
<dbReference type="HAMAP" id="MF_00508">
    <property type="entry name" value="Ribosomal_uS10"/>
    <property type="match status" value="1"/>
</dbReference>
<dbReference type="InterPro" id="IPR001848">
    <property type="entry name" value="Ribosomal_uS10"/>
</dbReference>
<dbReference type="InterPro" id="IPR018268">
    <property type="entry name" value="Ribosomal_uS10_CS"/>
</dbReference>
<dbReference type="InterPro" id="IPR027486">
    <property type="entry name" value="Ribosomal_uS10_dom"/>
</dbReference>
<dbReference type="InterPro" id="IPR036838">
    <property type="entry name" value="Ribosomal_uS10_dom_sf"/>
</dbReference>
<dbReference type="NCBIfam" id="NF001861">
    <property type="entry name" value="PRK00596.1"/>
    <property type="match status" value="1"/>
</dbReference>
<dbReference type="NCBIfam" id="TIGR01049">
    <property type="entry name" value="rpsJ_bact"/>
    <property type="match status" value="1"/>
</dbReference>
<dbReference type="PANTHER" id="PTHR11700">
    <property type="entry name" value="30S RIBOSOMAL PROTEIN S10 FAMILY MEMBER"/>
    <property type="match status" value="1"/>
</dbReference>
<dbReference type="Pfam" id="PF00338">
    <property type="entry name" value="Ribosomal_S10"/>
    <property type="match status" value="1"/>
</dbReference>
<dbReference type="PRINTS" id="PR00971">
    <property type="entry name" value="RIBOSOMALS10"/>
</dbReference>
<dbReference type="SMART" id="SM01403">
    <property type="entry name" value="Ribosomal_S10"/>
    <property type="match status" value="1"/>
</dbReference>
<dbReference type="SUPFAM" id="SSF54999">
    <property type="entry name" value="Ribosomal protein S10"/>
    <property type="match status" value="1"/>
</dbReference>
<dbReference type="PROSITE" id="PS00361">
    <property type="entry name" value="RIBOSOMAL_S10"/>
    <property type="match status" value="1"/>
</dbReference>
<organism>
    <name type="scientific">Bacillus cereus (strain G9842)</name>
    <dbReference type="NCBI Taxonomy" id="405531"/>
    <lineage>
        <taxon>Bacteria</taxon>
        <taxon>Bacillati</taxon>
        <taxon>Bacillota</taxon>
        <taxon>Bacilli</taxon>
        <taxon>Bacillales</taxon>
        <taxon>Bacillaceae</taxon>
        <taxon>Bacillus</taxon>
        <taxon>Bacillus cereus group</taxon>
    </lineage>
</organism>
<accession>B7IT18</accession>
<sequence length="102" mass="11698">MAKEKIRIRLKAYDHRILDQSAEKIVETAKRSGATVSGPIPLPTEKTIYTILRAVHKYKDSREQFEMRTHKRLIDIVSPTPQTVDSLMRLDLPSGVDIEIKL</sequence>
<reference key="1">
    <citation type="submission" date="2008-10" db="EMBL/GenBank/DDBJ databases">
        <title>Genome sequence of Bacillus cereus G9842.</title>
        <authorList>
            <person name="Dodson R.J."/>
            <person name="Durkin A.S."/>
            <person name="Rosovitz M.J."/>
            <person name="Rasko D.A."/>
            <person name="Hoffmaster A."/>
            <person name="Ravel J."/>
            <person name="Sutton G."/>
        </authorList>
    </citation>
    <scope>NUCLEOTIDE SEQUENCE [LARGE SCALE GENOMIC DNA]</scope>
    <source>
        <strain>G9842</strain>
    </source>
</reference>
<evidence type="ECO:0000255" key="1">
    <source>
        <dbReference type="HAMAP-Rule" id="MF_00508"/>
    </source>
</evidence>
<evidence type="ECO:0000305" key="2"/>
<name>RS10_BACC2</name>
<proteinExistence type="inferred from homology"/>